<feature type="chain" id="PRO_0000186117" description="Uncharacterized protein byn-1">
    <location>
        <begin position="1"/>
        <end position="449"/>
    </location>
</feature>
<feature type="region of interest" description="Disordered" evidence="1">
    <location>
        <begin position="1"/>
        <end position="58"/>
    </location>
</feature>
<feature type="region of interest" description="Disordered" evidence="1">
    <location>
        <begin position="71"/>
        <end position="125"/>
    </location>
</feature>
<feature type="compositionally biased region" description="Basic and acidic residues" evidence="1">
    <location>
        <begin position="30"/>
        <end position="46"/>
    </location>
</feature>
<feature type="compositionally biased region" description="Acidic residues" evidence="1">
    <location>
        <begin position="103"/>
        <end position="124"/>
    </location>
</feature>
<protein>
    <recommendedName>
        <fullName>Uncharacterized protein byn-1</fullName>
    </recommendedName>
</protein>
<reference key="1">
    <citation type="journal article" date="1998" name="Science">
        <title>Genome sequence of the nematode C. elegans: a platform for investigating biology.</title>
        <authorList>
            <consortium name="The C. elegans sequencing consortium"/>
        </authorList>
    </citation>
    <scope>NUCLEOTIDE SEQUENCE [LARGE SCALE GENOMIC DNA]</scope>
    <source>
        <strain>Bristol N2</strain>
    </source>
</reference>
<accession>Q20932</accession>
<gene>
    <name type="primary">byn-1</name>
    <name type="ORF">F57B9.5</name>
</gene>
<keyword id="KW-1185">Reference proteome</keyword>
<comment type="similarity">
    <text evidence="2">Belongs to the bystin family.</text>
</comment>
<name>BYN1_CAEEL</name>
<sequence length="449" mass="51621">MVKRNLKGRGDKLSANAPLDNQLEAGKVAKQRDELREKQKRKREDSQTDEFVPDSLSSKILNEARKQLLEEALERQETESATSSVPKRQRGAWLGADASGDKSDDDDDDNEEEDDNGFEDQVVELDPRDEADLARFLKKDAIQMSTLYDIIQAKIEAKQNDAELALSQVDPNEFNMRDMDPEVVEMYEQIGQYMSKYRSGKVPKAFKIIPKMINWEQILFLTKPETWTAAAMYQATRLFASNMNPKMCQRFYTLVLLPRLRDDIDEFKKLNYHLYQALCKAIYKPAAFFKGLILPLLESGTCTLREAVIFSSVLTKVPIPIFHSAAAMLRIAEMEYTGANSVFLRALIDKKYALPYRAVDGVVNHFIRLKTDERDMPVLWHQCLLALCQRYKNDLNAEQKAAIYELIRFHGHYLISPEIRRELESKETEDGHVITSVVVEGRKTDSMEF</sequence>
<proteinExistence type="inferred from homology"/>
<evidence type="ECO:0000256" key="1">
    <source>
        <dbReference type="SAM" id="MobiDB-lite"/>
    </source>
</evidence>
<evidence type="ECO:0000305" key="2"/>
<dbReference type="EMBL" id="FO081266">
    <property type="protein sequence ID" value="CCD70312.1"/>
    <property type="molecule type" value="Genomic_DNA"/>
</dbReference>
<dbReference type="PIR" id="B88493">
    <property type="entry name" value="B88493"/>
</dbReference>
<dbReference type="RefSeq" id="NP_498510.1">
    <property type="nucleotide sequence ID" value="NM_066109.6"/>
</dbReference>
<dbReference type="SMR" id="Q20932"/>
<dbReference type="BioGRID" id="41182">
    <property type="interactions" value="9"/>
</dbReference>
<dbReference type="FunCoup" id="Q20932">
    <property type="interactions" value="1704"/>
</dbReference>
<dbReference type="STRING" id="6239.F57B9.5.1"/>
<dbReference type="iPTMnet" id="Q20932"/>
<dbReference type="PaxDb" id="6239-F57B9.5"/>
<dbReference type="PeptideAtlas" id="Q20932"/>
<dbReference type="EnsemblMetazoa" id="F57B9.5.1">
    <property type="protein sequence ID" value="F57B9.5.1"/>
    <property type="gene ID" value="WBGene00000276"/>
</dbReference>
<dbReference type="GeneID" id="175968"/>
<dbReference type="KEGG" id="cel:CELE_F57B9.5"/>
<dbReference type="UCSC" id="F57B9.5.1">
    <property type="organism name" value="c. elegans"/>
</dbReference>
<dbReference type="AGR" id="WB:WBGene00000276"/>
<dbReference type="CTD" id="175968"/>
<dbReference type="WormBase" id="F57B9.5">
    <property type="protein sequence ID" value="CE25013"/>
    <property type="gene ID" value="WBGene00000276"/>
    <property type="gene designation" value="byn-1"/>
</dbReference>
<dbReference type="eggNOG" id="KOG3871">
    <property type="taxonomic scope" value="Eukaryota"/>
</dbReference>
<dbReference type="GeneTree" id="ENSGT00390000007241"/>
<dbReference type="HOGENOM" id="CLU_029727_0_1_1"/>
<dbReference type="InParanoid" id="Q20932"/>
<dbReference type="OMA" id="RRMPVLW"/>
<dbReference type="OrthoDB" id="2192561at2759"/>
<dbReference type="PhylomeDB" id="Q20932"/>
<dbReference type="PRO" id="PR:Q20932"/>
<dbReference type="Proteomes" id="UP000001940">
    <property type="component" value="Chromosome III"/>
</dbReference>
<dbReference type="Bgee" id="WBGene00000276">
    <property type="expression patterns" value="Expressed in pharyngeal muscle cell (C elegans) and 4 other cell types or tissues"/>
</dbReference>
<dbReference type="GO" id="GO:0005737">
    <property type="term" value="C:cytoplasm"/>
    <property type="evidence" value="ECO:0000318"/>
    <property type="project" value="GO_Central"/>
</dbReference>
<dbReference type="GO" id="GO:0005730">
    <property type="term" value="C:nucleolus"/>
    <property type="evidence" value="ECO:0000318"/>
    <property type="project" value="GO_Central"/>
</dbReference>
<dbReference type="GO" id="GO:0030688">
    <property type="term" value="C:preribosome, small subunit precursor"/>
    <property type="evidence" value="ECO:0000318"/>
    <property type="project" value="GO_Central"/>
</dbReference>
<dbReference type="GO" id="GO:0030515">
    <property type="term" value="F:snoRNA binding"/>
    <property type="evidence" value="ECO:0000318"/>
    <property type="project" value="GO_Central"/>
</dbReference>
<dbReference type="GO" id="GO:0006364">
    <property type="term" value="P:rRNA processing"/>
    <property type="evidence" value="ECO:0000318"/>
    <property type="project" value="GO_Central"/>
</dbReference>
<dbReference type="InterPro" id="IPR007955">
    <property type="entry name" value="Bystin"/>
</dbReference>
<dbReference type="PANTHER" id="PTHR12821">
    <property type="entry name" value="BYSTIN"/>
    <property type="match status" value="1"/>
</dbReference>
<dbReference type="PANTHER" id="PTHR12821:SF0">
    <property type="entry name" value="BYSTIN"/>
    <property type="match status" value="1"/>
</dbReference>
<dbReference type="Pfam" id="PF05291">
    <property type="entry name" value="Bystin"/>
    <property type="match status" value="1"/>
</dbReference>
<organism>
    <name type="scientific">Caenorhabditis elegans</name>
    <dbReference type="NCBI Taxonomy" id="6239"/>
    <lineage>
        <taxon>Eukaryota</taxon>
        <taxon>Metazoa</taxon>
        <taxon>Ecdysozoa</taxon>
        <taxon>Nematoda</taxon>
        <taxon>Chromadorea</taxon>
        <taxon>Rhabditida</taxon>
        <taxon>Rhabditina</taxon>
        <taxon>Rhabditomorpha</taxon>
        <taxon>Rhabditoidea</taxon>
        <taxon>Rhabditidae</taxon>
        <taxon>Peloderinae</taxon>
        <taxon>Caenorhabditis</taxon>
    </lineage>
</organism>